<keyword id="KW-0997">Cell inner membrane</keyword>
<keyword id="KW-1003">Cell membrane</keyword>
<keyword id="KW-0472">Membrane</keyword>
<keyword id="KW-1185">Reference proteome</keyword>
<keyword id="KW-0812">Transmembrane</keyword>
<keyword id="KW-1133">Transmembrane helix</keyword>
<keyword id="KW-0813">Transport</keyword>
<organism>
    <name type="scientific">Mycobacterium marinum (strain ATCC BAA-535 / M)</name>
    <dbReference type="NCBI Taxonomy" id="216594"/>
    <lineage>
        <taxon>Bacteria</taxon>
        <taxon>Bacillati</taxon>
        <taxon>Actinomycetota</taxon>
        <taxon>Actinomycetes</taxon>
        <taxon>Mycobacteriales</taxon>
        <taxon>Mycobacteriaceae</taxon>
        <taxon>Mycobacterium</taxon>
        <taxon>Mycobacterium ulcerans group</taxon>
    </lineage>
</organism>
<reference key="1">
    <citation type="journal article" date="2008" name="Genome Res.">
        <title>Insights from the complete genome sequence of Mycobacterium marinum on the evolution of Mycobacterium tuberculosis.</title>
        <authorList>
            <person name="Stinear T.P."/>
            <person name="Seemann T."/>
            <person name="Harrison P.F."/>
            <person name="Jenkin G.A."/>
            <person name="Davies J.K."/>
            <person name="Johnson P.D."/>
            <person name="Abdellah Z."/>
            <person name="Arrowsmith C."/>
            <person name="Chillingworth T."/>
            <person name="Churcher C."/>
            <person name="Clarke K."/>
            <person name="Cronin A."/>
            <person name="Davis P."/>
            <person name="Goodhead I."/>
            <person name="Holroyd N."/>
            <person name="Jagels K."/>
            <person name="Lord A."/>
            <person name="Moule S."/>
            <person name="Mungall K."/>
            <person name="Norbertczak H."/>
            <person name="Quail M.A."/>
            <person name="Rabbinowitsch E."/>
            <person name="Walker D."/>
            <person name="White B."/>
            <person name="Whitehead S."/>
            <person name="Small P.L."/>
            <person name="Brosch R."/>
            <person name="Ramakrishnan L."/>
            <person name="Fischbach M.A."/>
            <person name="Parkhill J."/>
            <person name="Cole S.T."/>
        </authorList>
    </citation>
    <scope>NUCLEOTIDE SEQUENCE [LARGE SCALE GENOMIC DNA]</scope>
    <source>
        <strain>ATCC BAA-535 / M</strain>
    </source>
</reference>
<reference key="2">
    <citation type="journal article" date="2009" name="Mol. Microbiol.">
        <title>PPE and PE_PGRS proteins of Mycobacterium marinum are transported via the type VII secretion system ESX-5.</title>
        <authorList>
            <person name="Abdallah A.M."/>
            <person name="Verboom T."/>
            <person name="Weerdenburg E.M."/>
            <person name="Gey van Pittius N.C."/>
            <person name="Mahasha P.W."/>
            <person name="Jimenez C."/>
            <person name="Parra M."/>
            <person name="Cadieux N."/>
            <person name="Brennan M.J."/>
            <person name="Appelmelk B.J."/>
            <person name="Bitter W."/>
        </authorList>
    </citation>
    <scope>FUNCTION</scope>
</reference>
<reference key="3">
    <citation type="journal article" date="2012" name="Mol. Microbiol.">
        <title>Composition of the type VII secretion system membrane complex.</title>
        <authorList>
            <person name="Houben E.N."/>
            <person name="Bestebroer J."/>
            <person name="Ummels R."/>
            <person name="Wilson L."/>
            <person name="Piersma S.R."/>
            <person name="Jimenez C.R."/>
            <person name="Ottenhoff T.H."/>
            <person name="Luirink J."/>
            <person name="Bitter W."/>
        </authorList>
    </citation>
    <scope>FUNCTION</scope>
    <scope>SUBUNIT</scope>
    <scope>SUBCELLULAR LOCATION</scope>
    <source>
        <strain>ATCC BAA-535 / M</strain>
    </source>
</reference>
<proteinExistence type="evidence at protein level"/>
<comment type="function">
    <text evidence="2 3">Part of the ESX-5 specialized secretion system, which is responsible for the secretion of EsxN and a number of PE_PGRS and PPE proteins (PubMed:19602152, PubMed:22925462). This component is essential for ESX-5 complex stability and secretion (PubMed:22925462).</text>
</comment>
<comment type="subunit">
    <text evidence="3">Part of the ESX-5 / type VII secretion system (T7SS), which is composed of cytosolic and membrane components. The ESX-5 membrane complex is composed of EccB5, EccC5, EccD5 and EccE5.</text>
</comment>
<comment type="subcellular location">
    <subcellularLocation>
        <location evidence="3">Cell inner membrane</location>
        <topology evidence="1">Multi-pass membrane protein</topology>
    </subcellularLocation>
</comment>
<comment type="similarity">
    <text evidence="5">Belongs to the EccD/Snm4 family.</text>
</comment>
<feature type="chain" id="PRO_0000434751" description="ESX-5 secretion system protein EccD5">
    <location>
        <begin position="1"/>
        <end position="503"/>
    </location>
</feature>
<feature type="transmembrane region" description="Helical" evidence="1">
    <location>
        <begin position="137"/>
        <end position="157"/>
    </location>
</feature>
<feature type="transmembrane region" description="Helical" evidence="1">
    <location>
        <begin position="169"/>
        <end position="189"/>
    </location>
</feature>
<feature type="transmembrane region" description="Helical" evidence="1">
    <location>
        <begin position="200"/>
        <end position="220"/>
    </location>
</feature>
<feature type="transmembrane region" description="Helical" evidence="1">
    <location>
        <begin position="224"/>
        <end position="244"/>
    </location>
</feature>
<feature type="transmembrane region" description="Helical" evidence="1">
    <location>
        <begin position="250"/>
        <end position="270"/>
    </location>
</feature>
<feature type="transmembrane region" description="Helical" evidence="1">
    <location>
        <begin position="272"/>
        <end position="292"/>
    </location>
</feature>
<feature type="transmembrane region" description="Helical" evidence="1">
    <location>
        <begin position="359"/>
        <end position="379"/>
    </location>
</feature>
<feature type="transmembrane region" description="Helical" evidence="1">
    <location>
        <begin position="414"/>
        <end position="434"/>
    </location>
</feature>
<feature type="transmembrane region" description="Helical" evidence="1">
    <location>
        <begin position="443"/>
        <end position="463"/>
    </location>
</feature>
<feature type="transmembrane region" description="Helical" evidence="1">
    <location>
        <begin position="480"/>
        <end position="500"/>
    </location>
</feature>
<gene>
    <name evidence="4" type="primary">eccD5</name>
    <name evidence="6" type="ordered locus">MMAR_2677</name>
</gene>
<evidence type="ECO:0000255" key="1"/>
<evidence type="ECO:0000269" key="2">
    <source>
    </source>
</evidence>
<evidence type="ECO:0000269" key="3">
    <source>
    </source>
</evidence>
<evidence type="ECO:0000303" key="4">
    <source>
    </source>
</evidence>
<evidence type="ECO:0000305" key="5"/>
<evidence type="ECO:0000312" key="6">
    <source>
        <dbReference type="EMBL" id="ACC41120.1"/>
    </source>
</evidence>
<name>ECCD5_MYCMM</name>
<protein>
    <recommendedName>
        <fullName evidence="5">ESX-5 secretion system protein EccD5</fullName>
    </recommendedName>
    <alternativeName>
        <fullName evidence="5">ESX conserved component D5</fullName>
    </alternativeName>
    <alternativeName>
        <fullName evidence="5">Type VII secretion system protein EccD5</fullName>
        <shortName evidence="5">T7SS protein EccD5</shortName>
    </alternativeName>
</protein>
<accession>B2HSU6</accession>
<dbReference type="EMBL" id="CP000854">
    <property type="protein sequence ID" value="ACC41120.1"/>
    <property type="molecule type" value="Genomic_DNA"/>
</dbReference>
<dbReference type="RefSeq" id="WP_012394391.1">
    <property type="nucleotide sequence ID" value="NC_010612.1"/>
</dbReference>
<dbReference type="SMR" id="B2HSU6"/>
<dbReference type="STRING" id="216594.MMAR_2677"/>
<dbReference type="GeneID" id="34343492"/>
<dbReference type="KEGG" id="mmi:MMAR_2677"/>
<dbReference type="eggNOG" id="ENOG502ZAY5">
    <property type="taxonomic scope" value="Bacteria"/>
</dbReference>
<dbReference type="HOGENOM" id="CLU_041782_0_0_11"/>
<dbReference type="OrthoDB" id="4711249at2"/>
<dbReference type="Proteomes" id="UP000001190">
    <property type="component" value="Chromosome"/>
</dbReference>
<dbReference type="GO" id="GO:0005886">
    <property type="term" value="C:plasma membrane"/>
    <property type="evidence" value="ECO:0007669"/>
    <property type="project" value="UniProtKB-SubCell"/>
</dbReference>
<dbReference type="Gene3D" id="3.10.20.90">
    <property type="entry name" value="Phosphatidylinositol 3-kinase Catalytic Subunit, Chain A, domain 1"/>
    <property type="match status" value="1"/>
</dbReference>
<dbReference type="InterPro" id="IPR044049">
    <property type="entry name" value="EccD_transm"/>
</dbReference>
<dbReference type="InterPro" id="IPR006707">
    <property type="entry name" value="T7SS_EccD"/>
</dbReference>
<dbReference type="InterPro" id="IPR024962">
    <property type="entry name" value="YukD-like"/>
</dbReference>
<dbReference type="NCBIfam" id="TIGR03920">
    <property type="entry name" value="T7SS_EccD"/>
    <property type="match status" value="1"/>
</dbReference>
<dbReference type="Pfam" id="PF19053">
    <property type="entry name" value="EccD"/>
    <property type="match status" value="1"/>
</dbReference>
<dbReference type="Pfam" id="PF08817">
    <property type="entry name" value="YukD"/>
    <property type="match status" value="1"/>
</dbReference>
<dbReference type="PIRSF" id="PIRSF017804">
    <property type="entry name" value="Secretion_EccD1"/>
    <property type="match status" value="1"/>
</dbReference>
<sequence length="503" mass="53516">MTAVADAPQAELEGVSSPRAVVVGIMAGEGVQIGVLLDANAPVSVMTDPLLKVVNSRLRELGESTLEAAGRGRWALCLIDGSPLRATQSLTEQDVYDGDRLWIRFIPDTEHRSQVIEHISTAVASNLSKRFASIDPVVAVQVGAGMVGTGVILASGVLGWWRWHHNTWLTTIFASVIAVLVLMVAMMLLMRATTDADRRVADIMLVSGLAPLTVAAASAPPGSVGSPQAVLGFGVLSIAAALALRFTGRRLAIYTAIVTICGLTTLASLSRMVAATSAVTLFATMLLICVVMYHASPALSRRLSGIRLPVFPSATSRWVFEARPDLPTTVAVAAGGPPVLEGPASVRDVVLQAERARSFLSGLLVGLGVLMVVSLTSLCNPHTSERWLPLMLAGFTSGFLMLRGRSYVDRWQSITLAVTAVIVVAAVSVRYALVLSSPLSVSIVASLLVLLPAAGMTAAAVVPNTIYSPLFRKFVEWTEYLCLMPIFPLAFWLMNVYAAIRYR</sequence>